<dbReference type="EMBL" id="U82219">
    <property type="protein sequence ID" value="AAB71504.1"/>
    <property type="molecule type" value="mRNA"/>
</dbReference>
<dbReference type="SMR" id="O24461"/>
<dbReference type="GO" id="GO:0005886">
    <property type="term" value="C:plasma membrane"/>
    <property type="evidence" value="ECO:0007669"/>
    <property type="project" value="UniProtKB-SubCell"/>
</dbReference>
<dbReference type="GO" id="GO:0005774">
    <property type="term" value="C:vacuolar membrane"/>
    <property type="evidence" value="ECO:0007669"/>
    <property type="project" value="TreeGrafter"/>
</dbReference>
<dbReference type="GO" id="GO:0005525">
    <property type="term" value="F:GTP binding"/>
    <property type="evidence" value="ECO:0007669"/>
    <property type="project" value="UniProtKB-KW"/>
</dbReference>
<dbReference type="GO" id="GO:0003924">
    <property type="term" value="F:GTPase activity"/>
    <property type="evidence" value="ECO:0007669"/>
    <property type="project" value="InterPro"/>
</dbReference>
<dbReference type="GO" id="GO:0015031">
    <property type="term" value="P:protein transport"/>
    <property type="evidence" value="ECO:0007669"/>
    <property type="project" value="UniProtKB-KW"/>
</dbReference>
<dbReference type="CDD" id="cd01862">
    <property type="entry name" value="Rab7"/>
    <property type="match status" value="1"/>
</dbReference>
<dbReference type="FunFam" id="3.40.50.300:FF:000295">
    <property type="entry name" value="Ras-related protein Rab7"/>
    <property type="match status" value="1"/>
</dbReference>
<dbReference type="Gene3D" id="3.40.50.300">
    <property type="entry name" value="P-loop containing nucleotide triphosphate hydrolases"/>
    <property type="match status" value="1"/>
</dbReference>
<dbReference type="InterPro" id="IPR027417">
    <property type="entry name" value="P-loop_NTPase"/>
</dbReference>
<dbReference type="InterPro" id="IPR005225">
    <property type="entry name" value="Small_GTP-bd"/>
</dbReference>
<dbReference type="InterPro" id="IPR001806">
    <property type="entry name" value="Small_GTPase"/>
</dbReference>
<dbReference type="NCBIfam" id="TIGR00231">
    <property type="entry name" value="small_GTP"/>
    <property type="match status" value="1"/>
</dbReference>
<dbReference type="PANTHER" id="PTHR47981">
    <property type="entry name" value="RAB FAMILY"/>
    <property type="match status" value="1"/>
</dbReference>
<dbReference type="PANTHER" id="PTHR47981:SF44">
    <property type="entry name" value="RAS-RELATED PROTEIN RABG3C-RELATED"/>
    <property type="match status" value="1"/>
</dbReference>
<dbReference type="Pfam" id="PF00071">
    <property type="entry name" value="Ras"/>
    <property type="match status" value="1"/>
</dbReference>
<dbReference type="PRINTS" id="PR00449">
    <property type="entry name" value="RASTRNSFRMNG"/>
</dbReference>
<dbReference type="SMART" id="SM00175">
    <property type="entry name" value="RAB"/>
    <property type="match status" value="1"/>
</dbReference>
<dbReference type="SMART" id="SM00176">
    <property type="entry name" value="RAN"/>
    <property type="match status" value="1"/>
</dbReference>
<dbReference type="SMART" id="SM00173">
    <property type="entry name" value="RAS"/>
    <property type="match status" value="1"/>
</dbReference>
<dbReference type="SMART" id="SM00174">
    <property type="entry name" value="RHO"/>
    <property type="match status" value="1"/>
</dbReference>
<dbReference type="SUPFAM" id="SSF52540">
    <property type="entry name" value="P-loop containing nucleoside triphosphate hydrolases"/>
    <property type="match status" value="1"/>
</dbReference>
<dbReference type="PROSITE" id="PS51419">
    <property type="entry name" value="RAB"/>
    <property type="match status" value="1"/>
</dbReference>
<keyword id="KW-1003">Cell membrane</keyword>
<keyword id="KW-0342">GTP-binding</keyword>
<keyword id="KW-0449">Lipoprotein</keyword>
<keyword id="KW-0472">Membrane</keyword>
<keyword id="KW-0488">Methylation</keyword>
<keyword id="KW-0547">Nucleotide-binding</keyword>
<keyword id="KW-0636">Prenylation</keyword>
<keyword id="KW-0653">Protein transport</keyword>
<keyword id="KW-0813">Transport</keyword>
<sequence>MASRRRMLLKVIILGDSGVGKTSLMNQYVNRKFSNQYKATIGADFLTKEVQFEDRLFTLQIWDTAGQERFQSLGVAFYRGADCCVLVYDVNVMKSFENLNNWREEFLIQATPSDPENFPFVVLGNKIDVDGGNSRVVSEKKAKAWCASKGNIPYFETSAKEGFNVDDAFQCIAKNALNNEPEEEIYLPDTIDVAGGGRQQRSSGCEC</sequence>
<proteinExistence type="evidence at transcript level"/>
<feature type="chain" id="PRO_0000121285" description="Ras-related protein Rab7">
    <location>
        <begin position="1"/>
        <end position="207"/>
    </location>
</feature>
<feature type="binding site" evidence="1">
    <location>
        <begin position="15"/>
        <end position="22"/>
    </location>
    <ligand>
        <name>GTP</name>
        <dbReference type="ChEBI" id="CHEBI:37565"/>
    </ligand>
</feature>
<feature type="binding site" evidence="1">
    <location>
        <begin position="63"/>
        <end position="67"/>
    </location>
    <ligand>
        <name>GTP</name>
        <dbReference type="ChEBI" id="CHEBI:37565"/>
    </ligand>
</feature>
<feature type="binding site" evidence="1">
    <location>
        <begin position="125"/>
        <end position="128"/>
    </location>
    <ligand>
        <name>GTP</name>
        <dbReference type="ChEBI" id="CHEBI:37565"/>
    </ligand>
</feature>
<feature type="modified residue" description="Cysteine methyl ester" evidence="1">
    <location>
        <position position="207"/>
    </location>
</feature>
<feature type="lipid moiety-binding region" description="S-geranylgeranyl cysteine" evidence="1">
    <location>
        <position position="205"/>
    </location>
</feature>
<feature type="lipid moiety-binding region" description="S-geranylgeranyl cysteine" evidence="1">
    <location>
        <position position="207"/>
    </location>
</feature>
<name>RAB7_PRUAR</name>
<evidence type="ECO:0000250" key="1"/>
<evidence type="ECO:0000305" key="2"/>
<comment type="function">
    <text evidence="1">Protein transport. Probably involved in vesicular traffic (By similarity).</text>
</comment>
<comment type="subcellular location">
    <subcellularLocation>
        <location evidence="2">Cell membrane</location>
        <topology evidence="2">Lipid-anchor</topology>
        <orientation evidence="2">Cytoplasmic side</orientation>
    </subcellularLocation>
</comment>
<comment type="similarity">
    <text evidence="2">Belongs to the small GTPase superfamily. Rab family.</text>
</comment>
<protein>
    <recommendedName>
        <fullName>Ras-related protein Rab7</fullName>
    </recommendedName>
</protein>
<accession>O24461</accession>
<reference key="1">
    <citation type="online journal article" date="1997" name="Plant Gene Register">
        <title>Molecular cloning and nucleotide sequence of a Rab7 small GTP-binding protein from apricot fruit. Gene expression during fruit ripening.</title>
        <authorList>
            <person name="Mbeguie-A-Mbeguie D."/>
            <person name="Gomez R.-M."/>
            <person name="Fils-Lycaon B.R."/>
        </authorList>
        <locator>PGR97-117</locator>
    </citation>
    <scope>NUCLEOTIDE SEQUENCE [MRNA]</scope>
    <source>
        <strain>cv. Bergeron</strain>
        <tissue>Fruit</tissue>
    </source>
</reference>
<organism>
    <name type="scientific">Prunus armeniaca</name>
    <name type="common">Apricot</name>
    <name type="synonym">Armeniaca vulgaris</name>
    <dbReference type="NCBI Taxonomy" id="36596"/>
    <lineage>
        <taxon>Eukaryota</taxon>
        <taxon>Viridiplantae</taxon>
        <taxon>Streptophyta</taxon>
        <taxon>Embryophyta</taxon>
        <taxon>Tracheophyta</taxon>
        <taxon>Spermatophyta</taxon>
        <taxon>Magnoliopsida</taxon>
        <taxon>eudicotyledons</taxon>
        <taxon>Gunneridae</taxon>
        <taxon>Pentapetalae</taxon>
        <taxon>rosids</taxon>
        <taxon>fabids</taxon>
        <taxon>Rosales</taxon>
        <taxon>Rosaceae</taxon>
        <taxon>Amygdaloideae</taxon>
        <taxon>Amygdaleae</taxon>
        <taxon>Prunus</taxon>
    </lineage>
</organism>